<accession>Q8XL46</accession>
<organism>
    <name type="scientific">Clostridium perfringens (strain 13 / Type A)</name>
    <dbReference type="NCBI Taxonomy" id="195102"/>
    <lineage>
        <taxon>Bacteria</taxon>
        <taxon>Bacillati</taxon>
        <taxon>Bacillota</taxon>
        <taxon>Clostridia</taxon>
        <taxon>Eubacteriales</taxon>
        <taxon>Clostridiaceae</taxon>
        <taxon>Clostridium</taxon>
    </lineage>
</organism>
<dbReference type="EMBL" id="BA000016">
    <property type="protein sequence ID" value="BAB80902.1"/>
    <property type="molecule type" value="Genomic_DNA"/>
</dbReference>
<dbReference type="RefSeq" id="WP_011010317.1">
    <property type="nucleotide sequence ID" value="NC_003366.1"/>
</dbReference>
<dbReference type="SMR" id="Q8XL46"/>
<dbReference type="STRING" id="195102.gene:10490459"/>
<dbReference type="KEGG" id="cpe:CPE1196"/>
<dbReference type="HOGENOM" id="CLU_018288_2_0_9"/>
<dbReference type="Proteomes" id="UP000000818">
    <property type="component" value="Chromosome"/>
</dbReference>
<dbReference type="GO" id="GO:0051539">
    <property type="term" value="F:4 iron, 4 sulfur cluster binding"/>
    <property type="evidence" value="ECO:0007669"/>
    <property type="project" value="UniProtKB-KW"/>
</dbReference>
<dbReference type="GO" id="GO:0003824">
    <property type="term" value="F:catalytic activity"/>
    <property type="evidence" value="ECO:0007669"/>
    <property type="project" value="InterPro"/>
</dbReference>
<dbReference type="GO" id="GO:0005506">
    <property type="term" value="F:iron ion binding"/>
    <property type="evidence" value="ECO:0007669"/>
    <property type="project" value="UniProtKB-UniRule"/>
</dbReference>
<dbReference type="Gene3D" id="3.80.30.20">
    <property type="entry name" value="tm_1862 like domain"/>
    <property type="match status" value="1"/>
</dbReference>
<dbReference type="HAMAP" id="MF_01251">
    <property type="entry name" value="UPF0313"/>
    <property type="match status" value="1"/>
</dbReference>
<dbReference type="InterPro" id="IPR006638">
    <property type="entry name" value="Elp3/MiaA/NifB-like_rSAM"/>
</dbReference>
<dbReference type="InterPro" id="IPR007197">
    <property type="entry name" value="rSAM"/>
</dbReference>
<dbReference type="InterPro" id="IPR023404">
    <property type="entry name" value="rSAM_horseshoe"/>
</dbReference>
<dbReference type="InterPro" id="IPR022946">
    <property type="entry name" value="UPF0313"/>
</dbReference>
<dbReference type="InterPro" id="IPR024560">
    <property type="entry name" value="UPF0313_C"/>
</dbReference>
<dbReference type="InterPro" id="IPR013704">
    <property type="entry name" value="UPF0313_N"/>
</dbReference>
<dbReference type="NCBIfam" id="TIGR03904">
    <property type="entry name" value="SAM_YgiQ"/>
    <property type="match status" value="1"/>
</dbReference>
<dbReference type="PANTHER" id="PTHR32331">
    <property type="entry name" value="UPF0313 PROTEIN YGIQ"/>
    <property type="match status" value="1"/>
</dbReference>
<dbReference type="PANTHER" id="PTHR32331:SF0">
    <property type="entry name" value="UPF0313 PROTEIN YGIQ"/>
    <property type="match status" value="1"/>
</dbReference>
<dbReference type="Pfam" id="PF11842">
    <property type="entry name" value="DUF3362"/>
    <property type="match status" value="1"/>
</dbReference>
<dbReference type="Pfam" id="PF04055">
    <property type="entry name" value="Radical_SAM"/>
    <property type="match status" value="1"/>
</dbReference>
<dbReference type="Pfam" id="PF08497">
    <property type="entry name" value="Radical_SAM_N"/>
    <property type="match status" value="1"/>
</dbReference>
<dbReference type="SFLD" id="SFLDG01082">
    <property type="entry name" value="B12-binding_domain_containing"/>
    <property type="match status" value="1"/>
</dbReference>
<dbReference type="SFLD" id="SFLDS00029">
    <property type="entry name" value="Radical_SAM"/>
    <property type="match status" value="1"/>
</dbReference>
<dbReference type="SFLD" id="SFLDG01069">
    <property type="entry name" value="UPF0313"/>
    <property type="match status" value="1"/>
</dbReference>
<dbReference type="SMART" id="SM00729">
    <property type="entry name" value="Elp3"/>
    <property type="match status" value="1"/>
</dbReference>
<dbReference type="SUPFAM" id="SSF102114">
    <property type="entry name" value="Radical SAM enzymes"/>
    <property type="match status" value="1"/>
</dbReference>
<dbReference type="PROSITE" id="PS51918">
    <property type="entry name" value="RADICAL_SAM"/>
    <property type="match status" value="1"/>
</dbReference>
<proteinExistence type="inferred from homology"/>
<keyword id="KW-0004">4Fe-4S</keyword>
<keyword id="KW-0408">Iron</keyword>
<keyword id="KW-0411">Iron-sulfur</keyword>
<keyword id="KW-0479">Metal-binding</keyword>
<keyword id="KW-1185">Reference proteome</keyword>
<keyword id="KW-0949">S-adenosyl-L-methionine</keyword>
<sequence>MSENKFLPICKDDMIERGWEQCDFVLVTADAYIDHHSFGTAIISRVLENAGYKVGIIAQPDWKSVDDFKKLGRPRLGFLVNGGNMDPMVNHYTVSKKLRKKDLYTPKGEMGKRPDRATIVYCNKIREAYKDVNIVIGGIEASLRRFAHYDYWENKVRKSILVDSGADLLVYGMSEKQIVEVADFLNQGFDGKYIRHIPGTCYIADSLDEIYEEHIVLPSFKEVSSDKRTYAECFKIQYDEQDPVRGRTLVQEHNGKYVVINKPEMPLSREELDRVYALPYQKTYHPIYEKDGGIAAIEEVKFSLVSSRGCSGNCSFCAITFHQGRIVTSRSEDSIVEEAEEITKYDDFKGYIHDIGGPTANFRKPACKKQLTLGACKHKRCMSPGICKNMEVDHREYLHLLRRVRKLPGIKKVFIRSGLRYDYIMADKDDTFFKELVEHHVSGQLKVAPEHVSPNVLKYMGKPAGKTYDEFRRKFFRITERLGKKQFIIPYLMSSHPGCKLEDAIMLAEYLRDINYQPEQVQDFYPTPGTLSTTMFYTGLDPLTMEEVYIPRSKEEKAMQRALLQFKNPKNYNIVYDALVKAGREDLIGNGPKCLIRDKNSFGKGNNHSNHKSGGRKNRNENSGRRESEDKKRSSHSKKQRGNKSRGFDQKSQRGSKGKKRR</sequence>
<evidence type="ECO:0000255" key="1">
    <source>
        <dbReference type="HAMAP-Rule" id="MF_01251"/>
    </source>
</evidence>
<evidence type="ECO:0000255" key="2">
    <source>
        <dbReference type="PROSITE-ProRule" id="PRU01266"/>
    </source>
</evidence>
<evidence type="ECO:0000256" key="3">
    <source>
        <dbReference type="SAM" id="MobiDB-lite"/>
    </source>
</evidence>
<reference key="1">
    <citation type="journal article" date="2002" name="Proc. Natl. Acad. Sci. U.S.A.">
        <title>Complete genome sequence of Clostridium perfringens, an anaerobic flesh-eater.</title>
        <authorList>
            <person name="Shimizu T."/>
            <person name="Ohtani K."/>
            <person name="Hirakawa H."/>
            <person name="Ohshima K."/>
            <person name="Yamashita A."/>
            <person name="Shiba T."/>
            <person name="Ogasawara N."/>
            <person name="Hattori M."/>
            <person name="Kuhara S."/>
            <person name="Hayashi H."/>
        </authorList>
    </citation>
    <scope>NUCLEOTIDE SEQUENCE [LARGE SCALE GENOMIC DNA]</scope>
    <source>
        <strain>13 / Type A</strain>
    </source>
</reference>
<name>Y1196_CLOPE</name>
<protein>
    <recommendedName>
        <fullName evidence="1">UPF0313 protein CPE1196</fullName>
    </recommendedName>
</protein>
<feature type="chain" id="PRO_0000076382" description="UPF0313 protein CPE1196">
    <location>
        <begin position="1"/>
        <end position="662"/>
    </location>
</feature>
<feature type="domain" description="Radical SAM core" evidence="2">
    <location>
        <begin position="296"/>
        <end position="567"/>
    </location>
</feature>
<feature type="region of interest" description="Disordered" evidence="3">
    <location>
        <begin position="597"/>
        <end position="662"/>
    </location>
</feature>
<feature type="compositionally biased region" description="Basic and acidic residues" evidence="3">
    <location>
        <begin position="618"/>
        <end position="632"/>
    </location>
</feature>
<feature type="compositionally biased region" description="Basic residues" evidence="3">
    <location>
        <begin position="633"/>
        <end position="644"/>
    </location>
</feature>
<feature type="binding site" evidence="1">
    <location>
        <position position="310"/>
    </location>
    <ligand>
        <name>[4Fe-4S] cluster</name>
        <dbReference type="ChEBI" id="CHEBI:49883"/>
        <note>4Fe-4S-S-AdoMet</note>
    </ligand>
</feature>
<feature type="binding site" evidence="1">
    <location>
        <position position="314"/>
    </location>
    <ligand>
        <name>[4Fe-4S] cluster</name>
        <dbReference type="ChEBI" id="CHEBI:49883"/>
        <note>4Fe-4S-S-AdoMet</note>
    </ligand>
</feature>
<feature type="binding site" evidence="1">
    <location>
        <position position="317"/>
    </location>
    <ligand>
        <name>[4Fe-4S] cluster</name>
        <dbReference type="ChEBI" id="CHEBI:49883"/>
        <note>4Fe-4S-S-AdoMet</note>
    </ligand>
</feature>
<comment type="cofactor">
    <cofactor evidence="1">
        <name>[4Fe-4S] cluster</name>
        <dbReference type="ChEBI" id="CHEBI:49883"/>
    </cofactor>
    <text evidence="1">Binds 1 [4Fe-4S] cluster. The cluster is coordinated with 3 cysteines and an exchangeable S-adenosyl-L-methionine.</text>
</comment>
<comment type="similarity">
    <text evidence="1">Belongs to the UPF0313 family.</text>
</comment>
<gene>
    <name type="ordered locus">CPE1196</name>
</gene>